<dbReference type="EMBL" id="CP000010">
    <property type="protein sequence ID" value="AAU47863.1"/>
    <property type="molecule type" value="Genomic_DNA"/>
</dbReference>
<dbReference type="RefSeq" id="WP_004199857.1">
    <property type="nucleotide sequence ID" value="NC_006348.1"/>
</dbReference>
<dbReference type="RefSeq" id="YP_104159.1">
    <property type="nucleotide sequence ID" value="NC_006348.1"/>
</dbReference>
<dbReference type="SMR" id="Q62GL2"/>
<dbReference type="GeneID" id="93061825"/>
<dbReference type="KEGG" id="bma:BMA2625"/>
<dbReference type="PATRIC" id="fig|243160.12.peg.2696"/>
<dbReference type="eggNOG" id="COG0197">
    <property type="taxonomic scope" value="Bacteria"/>
</dbReference>
<dbReference type="HOGENOM" id="CLU_078858_2_1_4"/>
<dbReference type="Proteomes" id="UP000006693">
    <property type="component" value="Chromosome 1"/>
</dbReference>
<dbReference type="GO" id="GO:0022625">
    <property type="term" value="C:cytosolic large ribosomal subunit"/>
    <property type="evidence" value="ECO:0007669"/>
    <property type="project" value="TreeGrafter"/>
</dbReference>
<dbReference type="GO" id="GO:0019843">
    <property type="term" value="F:rRNA binding"/>
    <property type="evidence" value="ECO:0007669"/>
    <property type="project" value="UniProtKB-UniRule"/>
</dbReference>
<dbReference type="GO" id="GO:0003735">
    <property type="term" value="F:structural constituent of ribosome"/>
    <property type="evidence" value="ECO:0007669"/>
    <property type="project" value="InterPro"/>
</dbReference>
<dbReference type="GO" id="GO:0000049">
    <property type="term" value="F:tRNA binding"/>
    <property type="evidence" value="ECO:0007669"/>
    <property type="project" value="UniProtKB-KW"/>
</dbReference>
<dbReference type="GO" id="GO:0006412">
    <property type="term" value="P:translation"/>
    <property type="evidence" value="ECO:0007669"/>
    <property type="project" value="UniProtKB-UniRule"/>
</dbReference>
<dbReference type="CDD" id="cd01433">
    <property type="entry name" value="Ribosomal_L16_L10e"/>
    <property type="match status" value="1"/>
</dbReference>
<dbReference type="FunFam" id="3.90.1170.10:FF:000001">
    <property type="entry name" value="50S ribosomal protein L16"/>
    <property type="match status" value="1"/>
</dbReference>
<dbReference type="Gene3D" id="3.90.1170.10">
    <property type="entry name" value="Ribosomal protein L10e/L16"/>
    <property type="match status" value="1"/>
</dbReference>
<dbReference type="HAMAP" id="MF_01342">
    <property type="entry name" value="Ribosomal_uL16"/>
    <property type="match status" value="1"/>
</dbReference>
<dbReference type="InterPro" id="IPR047873">
    <property type="entry name" value="Ribosomal_uL16"/>
</dbReference>
<dbReference type="InterPro" id="IPR000114">
    <property type="entry name" value="Ribosomal_uL16_bact-type"/>
</dbReference>
<dbReference type="InterPro" id="IPR020798">
    <property type="entry name" value="Ribosomal_uL16_CS"/>
</dbReference>
<dbReference type="InterPro" id="IPR016180">
    <property type="entry name" value="Ribosomal_uL16_dom"/>
</dbReference>
<dbReference type="InterPro" id="IPR036920">
    <property type="entry name" value="Ribosomal_uL16_sf"/>
</dbReference>
<dbReference type="NCBIfam" id="TIGR01164">
    <property type="entry name" value="rplP_bact"/>
    <property type="match status" value="1"/>
</dbReference>
<dbReference type="PANTHER" id="PTHR12220">
    <property type="entry name" value="50S/60S RIBOSOMAL PROTEIN L16"/>
    <property type="match status" value="1"/>
</dbReference>
<dbReference type="PANTHER" id="PTHR12220:SF13">
    <property type="entry name" value="LARGE RIBOSOMAL SUBUNIT PROTEIN UL16M"/>
    <property type="match status" value="1"/>
</dbReference>
<dbReference type="Pfam" id="PF00252">
    <property type="entry name" value="Ribosomal_L16"/>
    <property type="match status" value="1"/>
</dbReference>
<dbReference type="PRINTS" id="PR00060">
    <property type="entry name" value="RIBOSOMALL16"/>
</dbReference>
<dbReference type="SUPFAM" id="SSF54686">
    <property type="entry name" value="Ribosomal protein L16p/L10e"/>
    <property type="match status" value="1"/>
</dbReference>
<dbReference type="PROSITE" id="PS00586">
    <property type="entry name" value="RIBOSOMAL_L16_1"/>
    <property type="match status" value="1"/>
</dbReference>
<protein>
    <recommendedName>
        <fullName evidence="1">Large ribosomal subunit protein uL16</fullName>
    </recommendedName>
    <alternativeName>
        <fullName evidence="3">50S ribosomal protein L16</fullName>
    </alternativeName>
</protein>
<name>RL16_BURMA</name>
<gene>
    <name evidence="1" type="primary">rplP</name>
    <name type="ordered locus">BMA2625</name>
</gene>
<evidence type="ECO:0000255" key="1">
    <source>
        <dbReference type="HAMAP-Rule" id="MF_01342"/>
    </source>
</evidence>
<evidence type="ECO:0000256" key="2">
    <source>
        <dbReference type="SAM" id="MobiDB-lite"/>
    </source>
</evidence>
<evidence type="ECO:0000305" key="3"/>
<feature type="chain" id="PRO_0000062068" description="Large ribosomal subunit protein uL16">
    <location>
        <begin position="1"/>
        <end position="138"/>
    </location>
</feature>
<feature type="region of interest" description="Disordered" evidence="2">
    <location>
        <begin position="1"/>
        <end position="20"/>
    </location>
</feature>
<feature type="compositionally biased region" description="Basic residues" evidence="2">
    <location>
        <begin position="1"/>
        <end position="13"/>
    </location>
</feature>
<proteinExistence type="inferred from homology"/>
<comment type="function">
    <text evidence="1">Binds 23S rRNA and is also seen to make contacts with the A and possibly P site tRNAs.</text>
</comment>
<comment type="subunit">
    <text evidence="1">Part of the 50S ribosomal subunit.</text>
</comment>
<comment type="similarity">
    <text evidence="1">Belongs to the universal ribosomal protein uL16 family.</text>
</comment>
<accession>Q62GL2</accession>
<sequence>MLQPKRRKYRKEQKGRNTGIATRGNAVSFGEFGLKAVGRGRLTARQIEAARRAMTRHIKRGGRIWIRIFPDKPISQKPAEVRMGNGKGNPEYYVAEIQPGKMLYEMDGVSEELAREAFRLAAAKLPLKTTFIVRQLGA</sequence>
<reference key="1">
    <citation type="journal article" date="2004" name="Proc. Natl. Acad. Sci. U.S.A.">
        <title>Structural flexibility in the Burkholderia mallei genome.</title>
        <authorList>
            <person name="Nierman W.C."/>
            <person name="DeShazer D."/>
            <person name="Kim H.S."/>
            <person name="Tettelin H."/>
            <person name="Nelson K.E."/>
            <person name="Feldblyum T.V."/>
            <person name="Ulrich R.L."/>
            <person name="Ronning C.M."/>
            <person name="Brinkac L.M."/>
            <person name="Daugherty S.C."/>
            <person name="Davidsen T.D."/>
            <person name="DeBoy R.T."/>
            <person name="Dimitrov G."/>
            <person name="Dodson R.J."/>
            <person name="Durkin A.S."/>
            <person name="Gwinn M.L."/>
            <person name="Haft D.H."/>
            <person name="Khouri H.M."/>
            <person name="Kolonay J.F."/>
            <person name="Madupu R."/>
            <person name="Mohammoud Y."/>
            <person name="Nelson W.C."/>
            <person name="Radune D."/>
            <person name="Romero C.M."/>
            <person name="Sarria S."/>
            <person name="Selengut J."/>
            <person name="Shamblin C."/>
            <person name="Sullivan S.A."/>
            <person name="White O."/>
            <person name="Yu Y."/>
            <person name="Zafar N."/>
            <person name="Zhou L."/>
            <person name="Fraser C.M."/>
        </authorList>
    </citation>
    <scope>NUCLEOTIDE SEQUENCE [LARGE SCALE GENOMIC DNA]</scope>
    <source>
        <strain>ATCC 23344</strain>
    </source>
</reference>
<organism>
    <name type="scientific">Burkholderia mallei (strain ATCC 23344)</name>
    <dbReference type="NCBI Taxonomy" id="243160"/>
    <lineage>
        <taxon>Bacteria</taxon>
        <taxon>Pseudomonadati</taxon>
        <taxon>Pseudomonadota</taxon>
        <taxon>Betaproteobacteria</taxon>
        <taxon>Burkholderiales</taxon>
        <taxon>Burkholderiaceae</taxon>
        <taxon>Burkholderia</taxon>
        <taxon>pseudomallei group</taxon>
    </lineage>
</organism>
<keyword id="KW-1185">Reference proteome</keyword>
<keyword id="KW-0687">Ribonucleoprotein</keyword>
<keyword id="KW-0689">Ribosomal protein</keyword>
<keyword id="KW-0694">RNA-binding</keyword>
<keyword id="KW-0699">rRNA-binding</keyword>
<keyword id="KW-0820">tRNA-binding</keyword>